<comment type="function">
    <text evidence="1">Required for maturation of 30S ribosomal subunits.</text>
</comment>
<comment type="subcellular location">
    <subcellularLocation>
        <location evidence="1">Cytoplasm</location>
    </subcellularLocation>
</comment>
<comment type="similarity">
    <text evidence="1">Belongs to the RimP family.</text>
</comment>
<keyword id="KW-0963">Cytoplasm</keyword>
<keyword id="KW-1185">Reference proteome</keyword>
<keyword id="KW-0690">Ribosome biogenesis</keyword>
<proteinExistence type="inferred from homology"/>
<feature type="chain" id="PRO_0000384627" description="Ribosome maturation factor RimP">
    <location>
        <begin position="1"/>
        <end position="173"/>
    </location>
</feature>
<evidence type="ECO:0000255" key="1">
    <source>
        <dbReference type="HAMAP-Rule" id="MF_01077"/>
    </source>
</evidence>
<gene>
    <name evidence="1" type="primary">rimP</name>
    <name type="ordered locus">Cpha266_0367</name>
</gene>
<reference key="1">
    <citation type="submission" date="2006-12" db="EMBL/GenBank/DDBJ databases">
        <title>Complete sequence of Chlorobium phaeobacteroides DSM 266.</title>
        <authorList>
            <consortium name="US DOE Joint Genome Institute"/>
            <person name="Copeland A."/>
            <person name="Lucas S."/>
            <person name="Lapidus A."/>
            <person name="Barry K."/>
            <person name="Detter J.C."/>
            <person name="Glavina del Rio T."/>
            <person name="Hammon N."/>
            <person name="Israni S."/>
            <person name="Pitluck S."/>
            <person name="Goltsman E."/>
            <person name="Schmutz J."/>
            <person name="Larimer F."/>
            <person name="Land M."/>
            <person name="Hauser L."/>
            <person name="Mikhailova N."/>
            <person name="Li T."/>
            <person name="Overmann J."/>
            <person name="Bryant D.A."/>
            <person name="Richardson P."/>
        </authorList>
    </citation>
    <scope>NUCLEOTIDE SEQUENCE [LARGE SCALE GENOMIC DNA]</scope>
    <source>
        <strain>DSM 266 / SMG 266 / 2430</strain>
    </source>
</reference>
<dbReference type="EMBL" id="CP000492">
    <property type="protein sequence ID" value="ABL64426.1"/>
    <property type="molecule type" value="Genomic_DNA"/>
</dbReference>
<dbReference type="RefSeq" id="WP_011744259.1">
    <property type="nucleotide sequence ID" value="NC_008639.1"/>
</dbReference>
<dbReference type="SMR" id="A1BDE9"/>
<dbReference type="STRING" id="290317.Cpha266_0367"/>
<dbReference type="KEGG" id="cph:Cpha266_0367"/>
<dbReference type="eggNOG" id="COG0779">
    <property type="taxonomic scope" value="Bacteria"/>
</dbReference>
<dbReference type="HOGENOM" id="CLU_070525_3_1_10"/>
<dbReference type="OrthoDB" id="9789702at2"/>
<dbReference type="Proteomes" id="UP000008701">
    <property type="component" value="Chromosome"/>
</dbReference>
<dbReference type="GO" id="GO:0005829">
    <property type="term" value="C:cytosol"/>
    <property type="evidence" value="ECO:0007669"/>
    <property type="project" value="TreeGrafter"/>
</dbReference>
<dbReference type="GO" id="GO:0000028">
    <property type="term" value="P:ribosomal small subunit assembly"/>
    <property type="evidence" value="ECO:0007669"/>
    <property type="project" value="TreeGrafter"/>
</dbReference>
<dbReference type="GO" id="GO:0006412">
    <property type="term" value="P:translation"/>
    <property type="evidence" value="ECO:0007669"/>
    <property type="project" value="TreeGrafter"/>
</dbReference>
<dbReference type="Gene3D" id="3.30.300.70">
    <property type="entry name" value="RimP-like superfamily, N-terminal"/>
    <property type="match status" value="1"/>
</dbReference>
<dbReference type="HAMAP" id="MF_01077">
    <property type="entry name" value="RimP"/>
    <property type="match status" value="1"/>
</dbReference>
<dbReference type="InterPro" id="IPR003728">
    <property type="entry name" value="Ribosome_maturation_RimP"/>
</dbReference>
<dbReference type="InterPro" id="IPR028989">
    <property type="entry name" value="RimP_N"/>
</dbReference>
<dbReference type="InterPro" id="IPR035956">
    <property type="entry name" value="RimP_N_sf"/>
</dbReference>
<dbReference type="NCBIfam" id="NF011234">
    <property type="entry name" value="PRK14641.1"/>
    <property type="match status" value="1"/>
</dbReference>
<dbReference type="PANTHER" id="PTHR33867">
    <property type="entry name" value="RIBOSOME MATURATION FACTOR RIMP"/>
    <property type="match status" value="1"/>
</dbReference>
<dbReference type="PANTHER" id="PTHR33867:SF1">
    <property type="entry name" value="RIBOSOME MATURATION FACTOR RIMP"/>
    <property type="match status" value="1"/>
</dbReference>
<dbReference type="Pfam" id="PF02576">
    <property type="entry name" value="RimP_N"/>
    <property type="match status" value="1"/>
</dbReference>
<dbReference type="SUPFAM" id="SSF75420">
    <property type="entry name" value="YhbC-like, N-terminal domain"/>
    <property type="match status" value="1"/>
</dbReference>
<protein>
    <recommendedName>
        <fullName evidence="1">Ribosome maturation factor RimP</fullName>
    </recommendedName>
</protein>
<sequence length="173" mass="19176">MEEKIRRCVLQVLEATAGTKGEGVYLVSLSIKGSGKGTSIEVLVDTDTGIRIDQCAFLSRRIRECLEVEEESDGMSGDDFNLDVASPGLGKAIILQRQYARHVGRLFRVTFREEDGSMTEISGHLREILFPEEENASLVIEPLGKKKAGKKVSSENRTLRLDRVIRAVPEAEL</sequence>
<accession>A1BDE9</accession>
<organism>
    <name type="scientific">Chlorobium phaeobacteroides (strain DSM 266 / SMG 266 / 2430)</name>
    <dbReference type="NCBI Taxonomy" id="290317"/>
    <lineage>
        <taxon>Bacteria</taxon>
        <taxon>Pseudomonadati</taxon>
        <taxon>Chlorobiota</taxon>
        <taxon>Chlorobiia</taxon>
        <taxon>Chlorobiales</taxon>
        <taxon>Chlorobiaceae</taxon>
        <taxon>Chlorobium/Pelodictyon group</taxon>
        <taxon>Chlorobium</taxon>
    </lineage>
</organism>
<name>RIMP_CHLPD</name>